<protein>
    <recommendedName>
        <fullName>Acyl-homoserine-lactone synthase</fullName>
        <ecNumber>2.3.1.184</ecNumber>
    </recommendedName>
    <alternativeName>
        <fullName>Autoinducer synthesis protein ExpI</fullName>
    </alternativeName>
</protein>
<name>EXPI_PECPM</name>
<feature type="chain" id="PRO_0000210885" description="Acyl-homoserine-lactone synthase">
    <location>
        <begin position="1"/>
        <end position="217"/>
    </location>
</feature>
<reference key="1">
    <citation type="journal article" date="1993" name="EMBO J.">
        <title>A small diffusible signal molecule is responsible for the global control of virulence and exoenzyme production in the plant pathogen Erwinia carotovora.</title>
        <authorList>
            <person name="Pirhonen M."/>
            <person name="Flego D."/>
            <person name="Heikinheimo R."/>
            <person name="Palva E.T."/>
        </authorList>
    </citation>
    <scope>NUCLEOTIDE SEQUENCE [GENOMIC DNA]</scope>
    <source>
        <strain>SCC3193</strain>
    </source>
</reference>
<reference key="2">
    <citation type="submission" date="1994-12" db="EMBL/GenBank/DDBJ databases">
        <authorList>
            <person name="Heikinheimo R."/>
            <person name="Mae A."/>
            <person name="Flego D."/>
            <person name="Pirhonen M."/>
            <person name="Koiv V."/>
            <person name="Palva E.T."/>
        </authorList>
    </citation>
    <scope>NUCLEOTIDE SEQUENCE [GENOMIC DNA]</scope>
    <source>
        <strain>SCC3193</strain>
    </source>
</reference>
<reference key="3">
    <citation type="journal article" date="2012" name="J. Bacteriol.">
        <title>Genome sequence of Pectobacterium sp. strain SCC3193.</title>
        <authorList>
            <person name="Koskinen J.P."/>
            <person name="Laine P."/>
            <person name="Niemi O."/>
            <person name="Nykyri J."/>
            <person name="Harjunpaa H."/>
            <person name="Auvinen P."/>
            <person name="Paulin L."/>
            <person name="Pirhonen M."/>
            <person name="Palva T."/>
            <person name="Holm L."/>
        </authorList>
    </citation>
    <scope>NUCLEOTIDE SEQUENCE [LARGE SCALE GENOMIC DNA]</scope>
    <source>
        <strain>SCC3193</strain>
    </source>
</reference>
<dbReference type="EC" id="2.3.1.184"/>
<dbReference type="EMBL" id="X72891">
    <property type="protein sequence ID" value="CAA51409.1"/>
    <property type="molecule type" value="Genomic_DNA"/>
</dbReference>
<dbReference type="EMBL" id="X80475">
    <property type="status" value="NOT_ANNOTATED_CDS"/>
    <property type="molecule type" value="Genomic_DNA"/>
</dbReference>
<dbReference type="EMBL" id="CP003415">
    <property type="protein sequence ID" value="AFI92653.1"/>
    <property type="molecule type" value="Genomic_DNA"/>
</dbReference>
<dbReference type="PIR" id="S35324">
    <property type="entry name" value="S35324"/>
</dbReference>
<dbReference type="RefSeq" id="WP_014702025.1">
    <property type="nucleotide sequence ID" value="NZ_WABT01000012.1"/>
</dbReference>
<dbReference type="SMR" id="P33882"/>
<dbReference type="STRING" id="1905730.W5S_4607"/>
<dbReference type="KEGG" id="pec:W5S_4607"/>
<dbReference type="PATRIC" id="fig|1166016.3.peg.4669"/>
<dbReference type="eggNOG" id="COG3916">
    <property type="taxonomic scope" value="Bacteria"/>
</dbReference>
<dbReference type="HOGENOM" id="CLU_085711_4_1_6"/>
<dbReference type="OMA" id="CWRLMPT"/>
<dbReference type="Proteomes" id="UP000008044">
    <property type="component" value="Chromosome"/>
</dbReference>
<dbReference type="GO" id="GO:0061579">
    <property type="term" value="F:N-acyl homoserine lactone synthase activity"/>
    <property type="evidence" value="ECO:0007669"/>
    <property type="project" value="UniProtKB-EC"/>
</dbReference>
<dbReference type="GO" id="GO:0009372">
    <property type="term" value="P:quorum sensing"/>
    <property type="evidence" value="ECO:0007669"/>
    <property type="project" value="UniProtKB-KW"/>
</dbReference>
<dbReference type="GO" id="GO:0007165">
    <property type="term" value="P:signal transduction"/>
    <property type="evidence" value="ECO:0007669"/>
    <property type="project" value="TreeGrafter"/>
</dbReference>
<dbReference type="Gene3D" id="3.40.630.30">
    <property type="match status" value="1"/>
</dbReference>
<dbReference type="InterPro" id="IPR016181">
    <property type="entry name" value="Acyl_CoA_acyltransferase"/>
</dbReference>
<dbReference type="InterPro" id="IPR018311">
    <property type="entry name" value="Autoind_synth_CS"/>
</dbReference>
<dbReference type="InterPro" id="IPR001690">
    <property type="entry name" value="Autoind_synthase"/>
</dbReference>
<dbReference type="PANTHER" id="PTHR39322">
    <property type="entry name" value="ACYL-HOMOSERINE-LACTONE SYNTHASE"/>
    <property type="match status" value="1"/>
</dbReference>
<dbReference type="PANTHER" id="PTHR39322:SF1">
    <property type="entry name" value="ISOVALERYL-HOMOSERINE LACTONE SYNTHASE"/>
    <property type="match status" value="1"/>
</dbReference>
<dbReference type="Pfam" id="PF00765">
    <property type="entry name" value="Autoind_synth"/>
    <property type="match status" value="1"/>
</dbReference>
<dbReference type="PRINTS" id="PR01549">
    <property type="entry name" value="AUTOINDCRSYN"/>
</dbReference>
<dbReference type="SUPFAM" id="SSF55729">
    <property type="entry name" value="Acyl-CoA N-acyltransferases (Nat)"/>
    <property type="match status" value="1"/>
</dbReference>
<dbReference type="PROSITE" id="PS00949">
    <property type="entry name" value="AUTOINDUCER_SYNTH_1"/>
    <property type="match status" value="1"/>
</dbReference>
<dbReference type="PROSITE" id="PS51187">
    <property type="entry name" value="AUTOINDUCER_SYNTH_2"/>
    <property type="match status" value="1"/>
</dbReference>
<proteinExistence type="inferred from homology"/>
<gene>
    <name type="primary">expI</name>
    <name type="ordered locus">W5S_4607</name>
</gene>
<accession>P33882</accession>
<accession>K4FPM6</accession>
<sequence>MLEIFDVSYTLLSEKKSEELFTLRKETFKDRLNWAVKCINGMEFDQYDDDNATYLFGVEGDQVICSSRLIETKYPNMITGTFFPYFEKIDIPEGKYIESSRFFVDKARSKTILGNSYPVSTMFFLATVNYSKSKGYDGVYTIVSHPMLTILKRSGWKISIVEQGMSEKHERVYLLFLPVDNESQDVLVRRINHNQEFVESKLREWPLSFEPMTEPVG</sequence>
<evidence type="ECO:0000255" key="1">
    <source>
        <dbReference type="PROSITE-ProRule" id="PRU00533"/>
    </source>
</evidence>
<organism>
    <name type="scientific">Pectobacterium parmentieri</name>
    <dbReference type="NCBI Taxonomy" id="1905730"/>
    <lineage>
        <taxon>Bacteria</taxon>
        <taxon>Pseudomonadati</taxon>
        <taxon>Pseudomonadota</taxon>
        <taxon>Gammaproteobacteria</taxon>
        <taxon>Enterobacterales</taxon>
        <taxon>Pectobacteriaceae</taxon>
        <taxon>Pectobacterium</taxon>
    </lineage>
</organism>
<keyword id="KW-0071">Autoinducer synthesis</keyword>
<keyword id="KW-0673">Quorum sensing</keyword>
<keyword id="KW-0949">S-adenosyl-L-methionine</keyword>
<keyword id="KW-0808">Transferase</keyword>
<keyword id="KW-0843">Virulence</keyword>
<comment type="function">
    <text>Required for the synthesis of OHHL (N-(3-oxohexanoyl)-L-homoserine lactone), an autoinducer molecule which binds to ExpR and thus acts in virulence (soft rot disease) through the activation of genes for plant tissue macerating enzymes.</text>
</comment>
<comment type="catalytic activity">
    <reaction>
        <text>a fatty acyl-[ACP] + S-adenosyl-L-methionine = an N-acyl-L-homoserine lactone + S-methyl-5'-thioadenosine + holo-[ACP] + H(+)</text>
        <dbReference type="Rhea" id="RHEA:10096"/>
        <dbReference type="Rhea" id="RHEA-COMP:9685"/>
        <dbReference type="Rhea" id="RHEA-COMP:14125"/>
        <dbReference type="ChEBI" id="CHEBI:15378"/>
        <dbReference type="ChEBI" id="CHEBI:17509"/>
        <dbReference type="ChEBI" id="CHEBI:55474"/>
        <dbReference type="ChEBI" id="CHEBI:59789"/>
        <dbReference type="ChEBI" id="CHEBI:64479"/>
        <dbReference type="ChEBI" id="CHEBI:138651"/>
        <dbReference type="EC" id="2.3.1.184"/>
    </reaction>
</comment>
<comment type="similarity">
    <text evidence="1">Belongs to the autoinducer synthase family.</text>
</comment>